<reference key="1">
    <citation type="submission" date="2007-11" db="EMBL/GenBank/DDBJ databases">
        <title>Genome sequencing of phylogenetically and phenotypically diverse Coxiella burnetii isolates.</title>
        <authorList>
            <person name="Seshadri R."/>
            <person name="Samuel J.E."/>
        </authorList>
    </citation>
    <scope>NUCLEOTIDE SEQUENCE [LARGE SCALE GENOMIC DNA]</scope>
    <source>
        <strain>RSA 331 / Henzerling II</strain>
    </source>
</reference>
<comment type="function">
    <text evidence="1">Catalyzes the conversion of 4-hydroxy-tetrahydrodipicolinate (HTPA) to tetrahydrodipicolinate.</text>
</comment>
<comment type="catalytic activity">
    <reaction evidence="1">
        <text>(S)-2,3,4,5-tetrahydrodipicolinate + NAD(+) + H2O = (2S,4S)-4-hydroxy-2,3,4,5-tetrahydrodipicolinate + NADH + H(+)</text>
        <dbReference type="Rhea" id="RHEA:35323"/>
        <dbReference type="ChEBI" id="CHEBI:15377"/>
        <dbReference type="ChEBI" id="CHEBI:15378"/>
        <dbReference type="ChEBI" id="CHEBI:16845"/>
        <dbReference type="ChEBI" id="CHEBI:57540"/>
        <dbReference type="ChEBI" id="CHEBI:57945"/>
        <dbReference type="ChEBI" id="CHEBI:67139"/>
        <dbReference type="EC" id="1.17.1.8"/>
    </reaction>
</comment>
<comment type="catalytic activity">
    <reaction evidence="1">
        <text>(S)-2,3,4,5-tetrahydrodipicolinate + NADP(+) + H2O = (2S,4S)-4-hydroxy-2,3,4,5-tetrahydrodipicolinate + NADPH + H(+)</text>
        <dbReference type="Rhea" id="RHEA:35331"/>
        <dbReference type="ChEBI" id="CHEBI:15377"/>
        <dbReference type="ChEBI" id="CHEBI:15378"/>
        <dbReference type="ChEBI" id="CHEBI:16845"/>
        <dbReference type="ChEBI" id="CHEBI:57783"/>
        <dbReference type="ChEBI" id="CHEBI:58349"/>
        <dbReference type="ChEBI" id="CHEBI:67139"/>
        <dbReference type="EC" id="1.17.1.8"/>
    </reaction>
</comment>
<comment type="pathway">
    <text evidence="1">Amino-acid biosynthesis; L-lysine biosynthesis via DAP pathway; (S)-tetrahydrodipicolinate from L-aspartate: step 4/4.</text>
</comment>
<comment type="subcellular location">
    <subcellularLocation>
        <location evidence="1">Cytoplasm</location>
    </subcellularLocation>
</comment>
<comment type="similarity">
    <text evidence="1">Belongs to the DapB family.</text>
</comment>
<comment type="caution">
    <text evidence="2">Was originally thought to be a dihydrodipicolinate reductase (DHDPR), catalyzing the conversion of dihydrodipicolinate to tetrahydrodipicolinate. However, it was shown in E.coli that the substrate of the enzymatic reaction is not dihydrodipicolinate (DHDP) but in fact (2S,4S)-4-hydroxy-2,3,4,5-tetrahydrodipicolinic acid (HTPA), the product released by the DapA-catalyzed reaction.</text>
</comment>
<gene>
    <name evidence="1" type="primary">dapB</name>
    <name type="ordered locus">COXBURSA331_A1896</name>
</gene>
<accession>A9NA71</accession>
<dbReference type="EC" id="1.17.1.8" evidence="1"/>
<dbReference type="EMBL" id="CP000890">
    <property type="protein sequence ID" value="ABX78118.1"/>
    <property type="molecule type" value="Genomic_DNA"/>
</dbReference>
<dbReference type="RefSeq" id="WP_005770530.1">
    <property type="nucleotide sequence ID" value="NC_010117.1"/>
</dbReference>
<dbReference type="SMR" id="A9NA71"/>
<dbReference type="KEGG" id="cbs:COXBURSA331_A1896"/>
<dbReference type="HOGENOM" id="CLU_047479_0_1_6"/>
<dbReference type="UniPathway" id="UPA00034">
    <property type="reaction ID" value="UER00018"/>
</dbReference>
<dbReference type="GO" id="GO:0005829">
    <property type="term" value="C:cytosol"/>
    <property type="evidence" value="ECO:0007669"/>
    <property type="project" value="TreeGrafter"/>
</dbReference>
<dbReference type="GO" id="GO:0008839">
    <property type="term" value="F:4-hydroxy-tetrahydrodipicolinate reductase"/>
    <property type="evidence" value="ECO:0007669"/>
    <property type="project" value="UniProtKB-EC"/>
</dbReference>
<dbReference type="GO" id="GO:0051287">
    <property type="term" value="F:NAD binding"/>
    <property type="evidence" value="ECO:0007669"/>
    <property type="project" value="UniProtKB-UniRule"/>
</dbReference>
<dbReference type="GO" id="GO:0050661">
    <property type="term" value="F:NADP binding"/>
    <property type="evidence" value="ECO:0007669"/>
    <property type="project" value="UniProtKB-UniRule"/>
</dbReference>
<dbReference type="GO" id="GO:0016726">
    <property type="term" value="F:oxidoreductase activity, acting on CH or CH2 groups, NAD or NADP as acceptor"/>
    <property type="evidence" value="ECO:0007669"/>
    <property type="project" value="UniProtKB-UniRule"/>
</dbReference>
<dbReference type="GO" id="GO:0019877">
    <property type="term" value="P:diaminopimelate biosynthetic process"/>
    <property type="evidence" value="ECO:0007669"/>
    <property type="project" value="UniProtKB-UniRule"/>
</dbReference>
<dbReference type="GO" id="GO:0009089">
    <property type="term" value="P:lysine biosynthetic process via diaminopimelate"/>
    <property type="evidence" value="ECO:0007669"/>
    <property type="project" value="UniProtKB-UniRule"/>
</dbReference>
<dbReference type="CDD" id="cd02274">
    <property type="entry name" value="DHDPR_N"/>
    <property type="match status" value="1"/>
</dbReference>
<dbReference type="FunFam" id="3.30.360.10:FF:000009">
    <property type="entry name" value="4-hydroxy-tetrahydrodipicolinate reductase"/>
    <property type="match status" value="1"/>
</dbReference>
<dbReference type="Gene3D" id="3.30.360.10">
    <property type="entry name" value="Dihydrodipicolinate Reductase, domain 2"/>
    <property type="match status" value="1"/>
</dbReference>
<dbReference type="Gene3D" id="3.40.50.720">
    <property type="entry name" value="NAD(P)-binding Rossmann-like Domain"/>
    <property type="match status" value="1"/>
</dbReference>
<dbReference type="HAMAP" id="MF_00102">
    <property type="entry name" value="DapB"/>
    <property type="match status" value="1"/>
</dbReference>
<dbReference type="InterPro" id="IPR022663">
    <property type="entry name" value="DapB_C"/>
</dbReference>
<dbReference type="InterPro" id="IPR000846">
    <property type="entry name" value="DapB_N"/>
</dbReference>
<dbReference type="InterPro" id="IPR022664">
    <property type="entry name" value="DapB_N_CS"/>
</dbReference>
<dbReference type="InterPro" id="IPR023940">
    <property type="entry name" value="DHDPR_bac"/>
</dbReference>
<dbReference type="InterPro" id="IPR036291">
    <property type="entry name" value="NAD(P)-bd_dom_sf"/>
</dbReference>
<dbReference type="NCBIfam" id="TIGR00036">
    <property type="entry name" value="dapB"/>
    <property type="match status" value="1"/>
</dbReference>
<dbReference type="PANTHER" id="PTHR20836:SF0">
    <property type="entry name" value="4-HYDROXY-TETRAHYDRODIPICOLINATE REDUCTASE 1, CHLOROPLASTIC-RELATED"/>
    <property type="match status" value="1"/>
</dbReference>
<dbReference type="PANTHER" id="PTHR20836">
    <property type="entry name" value="DIHYDRODIPICOLINATE REDUCTASE"/>
    <property type="match status" value="1"/>
</dbReference>
<dbReference type="Pfam" id="PF05173">
    <property type="entry name" value="DapB_C"/>
    <property type="match status" value="1"/>
</dbReference>
<dbReference type="Pfam" id="PF01113">
    <property type="entry name" value="DapB_N"/>
    <property type="match status" value="1"/>
</dbReference>
<dbReference type="PIRSF" id="PIRSF000161">
    <property type="entry name" value="DHPR"/>
    <property type="match status" value="1"/>
</dbReference>
<dbReference type="SUPFAM" id="SSF55347">
    <property type="entry name" value="Glyceraldehyde-3-phosphate dehydrogenase-like, C-terminal domain"/>
    <property type="match status" value="1"/>
</dbReference>
<dbReference type="SUPFAM" id="SSF51735">
    <property type="entry name" value="NAD(P)-binding Rossmann-fold domains"/>
    <property type="match status" value="1"/>
</dbReference>
<dbReference type="PROSITE" id="PS01298">
    <property type="entry name" value="DAPB"/>
    <property type="match status" value="1"/>
</dbReference>
<organism>
    <name type="scientific">Coxiella burnetii (strain RSA 331 / Henzerling II)</name>
    <dbReference type="NCBI Taxonomy" id="360115"/>
    <lineage>
        <taxon>Bacteria</taxon>
        <taxon>Pseudomonadati</taxon>
        <taxon>Pseudomonadota</taxon>
        <taxon>Gammaproteobacteria</taxon>
        <taxon>Legionellales</taxon>
        <taxon>Coxiellaceae</taxon>
        <taxon>Coxiella</taxon>
    </lineage>
</organism>
<keyword id="KW-0028">Amino-acid biosynthesis</keyword>
<keyword id="KW-0963">Cytoplasm</keyword>
<keyword id="KW-0220">Diaminopimelate biosynthesis</keyword>
<keyword id="KW-0457">Lysine biosynthesis</keyword>
<keyword id="KW-0520">NAD</keyword>
<keyword id="KW-0521">NADP</keyword>
<keyword id="KW-0560">Oxidoreductase</keyword>
<protein>
    <recommendedName>
        <fullName evidence="1">4-hydroxy-tetrahydrodipicolinate reductase</fullName>
        <shortName evidence="1">HTPA reductase</shortName>
        <ecNumber evidence="1">1.17.1.8</ecNumber>
    </recommendedName>
</protein>
<name>DAPB_COXBR</name>
<evidence type="ECO:0000255" key="1">
    <source>
        <dbReference type="HAMAP-Rule" id="MF_00102"/>
    </source>
</evidence>
<evidence type="ECO:0000305" key="2"/>
<feature type="chain" id="PRO_1000075674" description="4-hydroxy-tetrahydrodipicolinate reductase">
    <location>
        <begin position="1"/>
        <end position="239"/>
    </location>
</feature>
<feature type="active site" description="Proton donor/acceptor" evidence="1">
    <location>
        <position position="134"/>
    </location>
</feature>
<feature type="active site" description="Proton donor" evidence="1">
    <location>
        <position position="138"/>
    </location>
</feature>
<feature type="binding site" evidence="1">
    <location>
        <begin position="9"/>
        <end position="14"/>
    </location>
    <ligand>
        <name>NAD(+)</name>
        <dbReference type="ChEBI" id="CHEBI:57540"/>
    </ligand>
</feature>
<feature type="binding site" evidence="1">
    <location>
        <begin position="78"/>
        <end position="80"/>
    </location>
    <ligand>
        <name>NAD(+)</name>
        <dbReference type="ChEBI" id="CHEBI:57540"/>
    </ligand>
</feature>
<feature type="binding site" evidence="1">
    <location>
        <begin position="104"/>
        <end position="107"/>
    </location>
    <ligand>
        <name>NAD(+)</name>
        <dbReference type="ChEBI" id="CHEBI:57540"/>
    </ligand>
</feature>
<feature type="binding site" evidence="1">
    <location>
        <position position="135"/>
    </location>
    <ligand>
        <name>(S)-2,3,4,5-tetrahydrodipicolinate</name>
        <dbReference type="ChEBI" id="CHEBI:16845"/>
    </ligand>
</feature>
<feature type="binding site" evidence="1">
    <location>
        <begin position="144"/>
        <end position="145"/>
    </location>
    <ligand>
        <name>(S)-2,3,4,5-tetrahydrodipicolinate</name>
        <dbReference type="ChEBI" id="CHEBI:16845"/>
    </ligand>
</feature>
<proteinExistence type="inferred from homology"/>
<sequence length="239" mass="26232">MAINVIINGINGKMGRVVKENITAQSDLELVSGTGRQDDLAKTIQTTHADVVIDFTTPQSVFHNAEIIIQSGARPVIGTTGLTLEQIALLDKQCRNKKLGAIVAPNFSVGAVLMMKYAKEAAHYFPDVEIIEMHHSQKIDAPSGTAIKTAQMIGEMRSSKKDEPFKDRARGEIKNGIPIHSIRLPGLFSHQSVIFGSNGETLTIRHDGMDRNCTMPGIFMACRKVMELDYLVYGLENLL</sequence>